<gene>
    <name type="primary">sfh5</name>
    <name type="ORF">ACLA_001490</name>
</gene>
<sequence length="435" mass="46880">MSEQQPEKTVAPVAEVPEVPEIPEAPESQPVTTTAAEAPKDTVPAPEAHPETHSEPKAEPAADVAAPLPAVAEAPAEAEDTAAAEQPEPEPAAEQQPEKPAYLAQNPALGQFFDRLPAILSATGHEEMWGVSLKDSDDVPTVNVLIKFLRANEGNVKLAEEQLTKALKWRQEMNPTALVESATYNAAKFGGLGYLTTYKDANGAQTVVTWNIYGGVKDMNKTFGDMDEFVKWRVALMEMAVKELKMAEATSVIEYDGEDPYQMLQVHDYLNVSFLRLNPAIKAATKKTIEVFTTAYPELLREKFFVNVPAIMGWMFAAMKVFLSKNTTRKFHPISNGANLAREFPALKDQFPKAYGGGGPALQDGARTVNLVQEPEAVPVPAPAPAPAPAAAEPAPQEEAKEESKEEPKAEPVAEPAKADAAVTTQEAATTAEAK</sequence>
<proteinExistence type="inferred from homology"/>
<feature type="chain" id="PRO_0000324967" description="Phosphatidylinositol transfer protein sfh5">
    <location>
        <begin position="1"/>
        <end position="435"/>
    </location>
</feature>
<feature type="domain" description="CRAL-TRIO" evidence="3">
    <location>
        <begin position="182"/>
        <end position="363"/>
    </location>
</feature>
<feature type="region of interest" description="Disordered" evidence="4">
    <location>
        <begin position="1"/>
        <end position="99"/>
    </location>
</feature>
<feature type="region of interest" description="Disordered" evidence="4">
    <location>
        <begin position="378"/>
        <end position="435"/>
    </location>
</feature>
<feature type="compositionally biased region" description="Low complexity" evidence="4">
    <location>
        <begin position="10"/>
        <end position="19"/>
    </location>
</feature>
<feature type="compositionally biased region" description="Basic and acidic residues" evidence="4">
    <location>
        <begin position="48"/>
        <end position="60"/>
    </location>
</feature>
<feature type="compositionally biased region" description="Low complexity" evidence="4">
    <location>
        <begin position="61"/>
        <end position="75"/>
    </location>
</feature>
<feature type="compositionally biased region" description="Low complexity" evidence="4">
    <location>
        <begin position="83"/>
        <end position="99"/>
    </location>
</feature>
<feature type="compositionally biased region" description="Pro residues" evidence="4">
    <location>
        <begin position="378"/>
        <end position="388"/>
    </location>
</feature>
<feature type="compositionally biased region" description="Basic and acidic residues" evidence="4">
    <location>
        <begin position="398"/>
        <end position="412"/>
    </location>
</feature>
<feature type="compositionally biased region" description="Low complexity" evidence="4">
    <location>
        <begin position="413"/>
        <end position="435"/>
    </location>
</feature>
<feature type="binding site" evidence="1">
    <location>
        <position position="213"/>
    </location>
    <ligand>
        <name>heme</name>
        <dbReference type="ChEBI" id="CHEBI:30413"/>
    </ligand>
</feature>
<feature type="binding site" evidence="1">
    <location>
        <position position="233"/>
    </location>
    <ligand>
        <name>heme</name>
        <dbReference type="ChEBI" id="CHEBI:30413"/>
    </ligand>
</feature>
<feature type="binding site" evidence="1">
    <location>
        <position position="267"/>
    </location>
    <ligand>
        <name>heme</name>
        <dbReference type="ChEBI" id="CHEBI:30413"/>
    </ligand>
</feature>
<feature type="binding site" description="proximal binding residue" evidence="1">
    <location>
        <position position="269"/>
    </location>
    <ligand>
        <name>heme</name>
        <dbReference type="ChEBI" id="CHEBI:30413"/>
    </ligand>
    <ligandPart>
        <name>Fe</name>
        <dbReference type="ChEBI" id="CHEBI:18248"/>
    </ligandPart>
</feature>
<feature type="binding site" evidence="1">
    <location>
        <position position="303"/>
    </location>
    <ligand>
        <name>heme</name>
        <dbReference type="ChEBI" id="CHEBI:30413"/>
    </ligand>
</feature>
<dbReference type="EMBL" id="DS027004">
    <property type="protein sequence ID" value="EAW14738.1"/>
    <property type="molecule type" value="Genomic_DNA"/>
</dbReference>
<dbReference type="RefSeq" id="XP_001276164.1">
    <property type="nucleotide sequence ID" value="XM_001276163.1"/>
</dbReference>
<dbReference type="SMR" id="A1C4X0"/>
<dbReference type="STRING" id="344612.A1C4X0"/>
<dbReference type="EnsemblFungi" id="EAW14738">
    <property type="protein sequence ID" value="EAW14738"/>
    <property type="gene ID" value="ACLA_001490"/>
</dbReference>
<dbReference type="GeneID" id="4708695"/>
<dbReference type="KEGG" id="act:ACLA_001490"/>
<dbReference type="VEuPathDB" id="FungiDB:ACLA_001490"/>
<dbReference type="eggNOG" id="KOG1471">
    <property type="taxonomic scope" value="Eukaryota"/>
</dbReference>
<dbReference type="HOGENOM" id="CLU_045138_1_0_1"/>
<dbReference type="OMA" id="MVQIHDY"/>
<dbReference type="OrthoDB" id="75724at2759"/>
<dbReference type="Proteomes" id="UP000006701">
    <property type="component" value="Unassembled WGS sequence"/>
</dbReference>
<dbReference type="GO" id="GO:0032541">
    <property type="term" value="C:cortical endoplasmic reticulum"/>
    <property type="evidence" value="ECO:0007669"/>
    <property type="project" value="TreeGrafter"/>
</dbReference>
<dbReference type="GO" id="GO:0005829">
    <property type="term" value="C:cytosol"/>
    <property type="evidence" value="ECO:0007669"/>
    <property type="project" value="TreeGrafter"/>
</dbReference>
<dbReference type="GO" id="GO:0005789">
    <property type="term" value="C:endoplasmic reticulum membrane"/>
    <property type="evidence" value="ECO:0007669"/>
    <property type="project" value="UniProtKB-SubCell"/>
</dbReference>
<dbReference type="GO" id="GO:0005886">
    <property type="term" value="C:plasma membrane"/>
    <property type="evidence" value="ECO:0007669"/>
    <property type="project" value="TreeGrafter"/>
</dbReference>
<dbReference type="GO" id="GO:0046872">
    <property type="term" value="F:metal ion binding"/>
    <property type="evidence" value="ECO:0007669"/>
    <property type="project" value="UniProtKB-KW"/>
</dbReference>
<dbReference type="GO" id="GO:0008526">
    <property type="term" value="F:phosphatidylinositol transfer activity"/>
    <property type="evidence" value="ECO:0007669"/>
    <property type="project" value="InterPro"/>
</dbReference>
<dbReference type="GO" id="GO:0043001">
    <property type="term" value="P:Golgi to plasma membrane protein transport"/>
    <property type="evidence" value="ECO:0007669"/>
    <property type="project" value="TreeGrafter"/>
</dbReference>
<dbReference type="GO" id="GO:0017157">
    <property type="term" value="P:regulation of exocytosis"/>
    <property type="evidence" value="ECO:0007669"/>
    <property type="project" value="TreeGrafter"/>
</dbReference>
<dbReference type="CDD" id="cd00170">
    <property type="entry name" value="SEC14"/>
    <property type="match status" value="1"/>
</dbReference>
<dbReference type="FunFam" id="3.40.525.10:FF:000017">
    <property type="entry name" value="Phosphatidylinositol transfer protein sfh5"/>
    <property type="match status" value="1"/>
</dbReference>
<dbReference type="Gene3D" id="3.40.525.10">
    <property type="entry name" value="CRAL-TRIO lipid binding domain"/>
    <property type="match status" value="1"/>
</dbReference>
<dbReference type="InterPro" id="IPR001251">
    <property type="entry name" value="CRAL-TRIO_dom"/>
</dbReference>
<dbReference type="InterPro" id="IPR036865">
    <property type="entry name" value="CRAL-TRIO_dom_sf"/>
</dbReference>
<dbReference type="InterPro" id="IPR011074">
    <property type="entry name" value="CRAL/TRIO_N_dom"/>
</dbReference>
<dbReference type="InterPro" id="IPR036273">
    <property type="entry name" value="CRAL/TRIO_N_dom_sf"/>
</dbReference>
<dbReference type="InterPro" id="IPR042938">
    <property type="entry name" value="Sfh5"/>
</dbReference>
<dbReference type="PANTHER" id="PTHR47669">
    <property type="entry name" value="PHOSPHATIDYLINOSITOL TRANSFER PROTEIN SFH5"/>
    <property type="match status" value="1"/>
</dbReference>
<dbReference type="PANTHER" id="PTHR47669:SF1">
    <property type="entry name" value="PHOSPHATIDYLINOSITOL TRANSFER PROTEIN SFH5"/>
    <property type="match status" value="1"/>
</dbReference>
<dbReference type="Pfam" id="PF00650">
    <property type="entry name" value="CRAL_TRIO"/>
    <property type="match status" value="1"/>
</dbReference>
<dbReference type="Pfam" id="PF03765">
    <property type="entry name" value="CRAL_TRIO_N"/>
    <property type="match status" value="1"/>
</dbReference>
<dbReference type="SMART" id="SM00516">
    <property type="entry name" value="SEC14"/>
    <property type="match status" value="1"/>
</dbReference>
<dbReference type="SUPFAM" id="SSF52087">
    <property type="entry name" value="CRAL/TRIO domain"/>
    <property type="match status" value="1"/>
</dbReference>
<dbReference type="SUPFAM" id="SSF46938">
    <property type="entry name" value="CRAL/TRIO N-terminal domain"/>
    <property type="match status" value="1"/>
</dbReference>
<dbReference type="PROSITE" id="PS50191">
    <property type="entry name" value="CRAL_TRIO"/>
    <property type="match status" value="1"/>
</dbReference>
<protein>
    <recommendedName>
        <fullName>Phosphatidylinositol transfer protein sfh5</fullName>
        <shortName>PITP sfh5</shortName>
    </recommendedName>
</protein>
<comment type="function">
    <text evidence="2">Non-classical phosphatidylinositol (PtdIns) transfer protein (PITP), which exhibits PtdIns-binding/transfer activity in the absence of detectable PtdCho-binding/transfer activity. Regulates PtdIns(4,5)P2 homeostasis at the plasma membrane. Heme-binding protein that may play a role in organic oxidant-induced stress responses.</text>
</comment>
<comment type="catalytic activity">
    <reaction evidence="2">
        <text>a 1,2-diacyl-sn-glycero-3-phospho-(1D-myo-inositol)(in) = a 1,2-diacyl-sn-glycero-3-phospho-(1D-myo-inositol)(out)</text>
        <dbReference type="Rhea" id="RHEA:38691"/>
        <dbReference type="ChEBI" id="CHEBI:57880"/>
    </reaction>
    <physiologicalReaction direction="left-to-right" evidence="2">
        <dbReference type="Rhea" id="RHEA:38692"/>
    </physiologicalReaction>
</comment>
<comment type="cofactor">
    <cofactor evidence="1">
        <name>heme b</name>
        <dbReference type="ChEBI" id="CHEBI:60344"/>
    </cofactor>
</comment>
<comment type="subcellular location">
    <subcellularLocation>
        <location evidence="2">Cytoplasm</location>
    </subcellularLocation>
    <subcellularLocation>
        <location evidence="2">Endoplasmic reticulum membrane</location>
        <topology evidence="2">Peripheral membrane protein</topology>
    </subcellularLocation>
    <subcellularLocation>
        <location evidence="2">Microsome membrane</location>
        <topology evidence="2">Peripheral membrane protein</topology>
    </subcellularLocation>
</comment>
<comment type="similarity">
    <text evidence="5">Belongs to the SFH5 family.</text>
</comment>
<evidence type="ECO:0000250" key="1">
    <source>
        <dbReference type="UniProtKB" id="A6ZQI5"/>
    </source>
</evidence>
<evidence type="ECO:0000250" key="2">
    <source>
        <dbReference type="UniProtKB" id="P47008"/>
    </source>
</evidence>
<evidence type="ECO:0000255" key="3">
    <source>
        <dbReference type="PROSITE-ProRule" id="PRU00056"/>
    </source>
</evidence>
<evidence type="ECO:0000256" key="4">
    <source>
        <dbReference type="SAM" id="MobiDB-lite"/>
    </source>
</evidence>
<evidence type="ECO:0000305" key="5"/>
<reference key="1">
    <citation type="journal article" date="2008" name="PLoS Genet.">
        <title>Genomic islands in the pathogenic filamentous fungus Aspergillus fumigatus.</title>
        <authorList>
            <person name="Fedorova N.D."/>
            <person name="Khaldi N."/>
            <person name="Joardar V.S."/>
            <person name="Maiti R."/>
            <person name="Amedeo P."/>
            <person name="Anderson M.J."/>
            <person name="Crabtree J."/>
            <person name="Silva J.C."/>
            <person name="Badger J.H."/>
            <person name="Albarraq A."/>
            <person name="Angiuoli S."/>
            <person name="Bussey H."/>
            <person name="Bowyer P."/>
            <person name="Cotty P.J."/>
            <person name="Dyer P.S."/>
            <person name="Egan A."/>
            <person name="Galens K."/>
            <person name="Fraser-Liggett C.M."/>
            <person name="Haas B.J."/>
            <person name="Inman J.M."/>
            <person name="Kent R."/>
            <person name="Lemieux S."/>
            <person name="Malavazi I."/>
            <person name="Orvis J."/>
            <person name="Roemer T."/>
            <person name="Ronning C.M."/>
            <person name="Sundaram J.P."/>
            <person name="Sutton G."/>
            <person name="Turner G."/>
            <person name="Venter J.C."/>
            <person name="White O.R."/>
            <person name="Whitty B.R."/>
            <person name="Youngman P."/>
            <person name="Wolfe K.H."/>
            <person name="Goldman G.H."/>
            <person name="Wortman J.R."/>
            <person name="Jiang B."/>
            <person name="Denning D.W."/>
            <person name="Nierman W.C."/>
        </authorList>
    </citation>
    <scope>NUCLEOTIDE SEQUENCE [LARGE SCALE GENOMIC DNA]</scope>
    <source>
        <strain>ATCC 1007 / CBS 513.65 / DSM 816 / NCTC 3887 / NRRL 1 / QM 1276 / 107</strain>
    </source>
</reference>
<name>SFH5_ASPCL</name>
<keyword id="KW-0963">Cytoplasm</keyword>
<keyword id="KW-0256">Endoplasmic reticulum</keyword>
<keyword id="KW-0349">Heme</keyword>
<keyword id="KW-0408">Iron</keyword>
<keyword id="KW-0445">Lipid transport</keyword>
<keyword id="KW-0472">Membrane</keyword>
<keyword id="KW-0479">Metal-binding</keyword>
<keyword id="KW-0492">Microsome</keyword>
<keyword id="KW-1185">Reference proteome</keyword>
<keyword id="KW-0813">Transport</keyword>
<accession>A1C4X0</accession>
<organism>
    <name type="scientific">Aspergillus clavatus (strain ATCC 1007 / CBS 513.65 / DSM 816 / NCTC 3887 / NRRL 1 / QM 1276 / 107)</name>
    <dbReference type="NCBI Taxonomy" id="344612"/>
    <lineage>
        <taxon>Eukaryota</taxon>
        <taxon>Fungi</taxon>
        <taxon>Dikarya</taxon>
        <taxon>Ascomycota</taxon>
        <taxon>Pezizomycotina</taxon>
        <taxon>Eurotiomycetes</taxon>
        <taxon>Eurotiomycetidae</taxon>
        <taxon>Eurotiales</taxon>
        <taxon>Aspergillaceae</taxon>
        <taxon>Aspergillus</taxon>
        <taxon>Aspergillus subgen. Fumigati</taxon>
    </lineage>
</organism>